<accession>A1TZ11</accession>
<proteinExistence type="inferred from homology"/>
<name>ILVC_MARN8</name>
<evidence type="ECO:0000255" key="1">
    <source>
        <dbReference type="HAMAP-Rule" id="MF_00435"/>
    </source>
</evidence>
<evidence type="ECO:0000255" key="2">
    <source>
        <dbReference type="PROSITE-ProRule" id="PRU01197"/>
    </source>
</evidence>
<evidence type="ECO:0000255" key="3">
    <source>
        <dbReference type="PROSITE-ProRule" id="PRU01198"/>
    </source>
</evidence>
<keyword id="KW-0028">Amino-acid biosynthesis</keyword>
<keyword id="KW-0100">Branched-chain amino acid biosynthesis</keyword>
<keyword id="KW-0460">Magnesium</keyword>
<keyword id="KW-0479">Metal-binding</keyword>
<keyword id="KW-0521">NADP</keyword>
<keyword id="KW-0560">Oxidoreductase</keyword>
<sequence>MQVYYDKDCDLSIIQGKKVAILGFGSQGHAHACNLKDSGVDVVVGLRAGSSSIAKAEAYGLKTSDVASAVASADVVMVLTPDEFQAQLYREEIEPNLKQGATLAFAHGFAIHYNQIVPRKDLDVIMVAPKAPGHTVRTEFTKGGGIPDLIAIFQDASGNAKNVALSYASGIGGGRTGIIETTFKDETETDLFGEQAVLCGGAVELVKAGFETLTEAGYAPEMAYFECLHELKLIVDLMYEGGIANMNYSISNNAEYGEYVTGPEVINEQSREAMRNALKRIQSGEYAKMFISEGALNYPSMTARRRQNAAHEIETVGEKLRSMMPWISANKIVDKDKN</sequence>
<comment type="function">
    <text evidence="1">Involved in the biosynthesis of branched-chain amino acids (BCAA). Catalyzes an alkyl-migration followed by a ketol-acid reduction of (S)-2-acetolactate (S2AL) to yield (R)-2,3-dihydroxy-isovalerate. In the isomerase reaction, S2AL is rearranged via a Mg-dependent methyl migration to produce 3-hydroxy-3-methyl-2-ketobutyrate (HMKB). In the reductase reaction, this 2-ketoacid undergoes a metal-dependent reduction by NADPH to yield (R)-2,3-dihydroxy-isovalerate.</text>
</comment>
<comment type="catalytic activity">
    <reaction evidence="1">
        <text>(2R)-2,3-dihydroxy-3-methylbutanoate + NADP(+) = (2S)-2-acetolactate + NADPH + H(+)</text>
        <dbReference type="Rhea" id="RHEA:22068"/>
        <dbReference type="ChEBI" id="CHEBI:15378"/>
        <dbReference type="ChEBI" id="CHEBI:49072"/>
        <dbReference type="ChEBI" id="CHEBI:57783"/>
        <dbReference type="ChEBI" id="CHEBI:58349"/>
        <dbReference type="ChEBI" id="CHEBI:58476"/>
        <dbReference type="EC" id="1.1.1.86"/>
    </reaction>
</comment>
<comment type="catalytic activity">
    <reaction evidence="1">
        <text>(2R,3R)-2,3-dihydroxy-3-methylpentanoate + NADP(+) = (S)-2-ethyl-2-hydroxy-3-oxobutanoate + NADPH + H(+)</text>
        <dbReference type="Rhea" id="RHEA:13493"/>
        <dbReference type="ChEBI" id="CHEBI:15378"/>
        <dbReference type="ChEBI" id="CHEBI:49256"/>
        <dbReference type="ChEBI" id="CHEBI:49258"/>
        <dbReference type="ChEBI" id="CHEBI:57783"/>
        <dbReference type="ChEBI" id="CHEBI:58349"/>
        <dbReference type="EC" id="1.1.1.86"/>
    </reaction>
</comment>
<comment type="cofactor">
    <cofactor evidence="1">
        <name>Mg(2+)</name>
        <dbReference type="ChEBI" id="CHEBI:18420"/>
    </cofactor>
    <text evidence="1">Binds 2 magnesium ions per subunit.</text>
</comment>
<comment type="pathway">
    <text evidence="1">Amino-acid biosynthesis; L-isoleucine biosynthesis; L-isoleucine from 2-oxobutanoate: step 2/4.</text>
</comment>
<comment type="pathway">
    <text evidence="1">Amino-acid biosynthesis; L-valine biosynthesis; L-valine from pyruvate: step 2/4.</text>
</comment>
<comment type="similarity">
    <text evidence="1">Belongs to the ketol-acid reductoisomerase family.</text>
</comment>
<gene>
    <name evidence="1" type="primary">ilvC</name>
    <name type="ordered locus">Maqu_0884</name>
</gene>
<organism>
    <name type="scientific">Marinobacter nauticus (strain ATCC 700491 / DSM 11845 / VT8)</name>
    <name type="common">Marinobacter aquaeolei</name>
    <dbReference type="NCBI Taxonomy" id="351348"/>
    <lineage>
        <taxon>Bacteria</taxon>
        <taxon>Pseudomonadati</taxon>
        <taxon>Pseudomonadota</taxon>
        <taxon>Gammaproteobacteria</taxon>
        <taxon>Pseudomonadales</taxon>
        <taxon>Marinobacteraceae</taxon>
        <taxon>Marinobacter</taxon>
    </lineage>
</organism>
<reference key="1">
    <citation type="journal article" date="2011" name="Appl. Environ. Microbiol.">
        <title>Genomic potential of Marinobacter aquaeolei, a biogeochemical 'opportunitroph'.</title>
        <authorList>
            <person name="Singer E."/>
            <person name="Webb E.A."/>
            <person name="Nelson W.C."/>
            <person name="Heidelberg J.F."/>
            <person name="Ivanova N."/>
            <person name="Pati A."/>
            <person name="Edwards K.J."/>
        </authorList>
    </citation>
    <scope>NUCLEOTIDE SEQUENCE [LARGE SCALE GENOMIC DNA]</scope>
    <source>
        <strain>ATCC 700491 / DSM 11845 / VT8</strain>
    </source>
</reference>
<dbReference type="EC" id="1.1.1.86" evidence="1"/>
<dbReference type="EMBL" id="CP000514">
    <property type="protein sequence ID" value="ABM17980.1"/>
    <property type="molecule type" value="Genomic_DNA"/>
</dbReference>
<dbReference type="RefSeq" id="WP_011784402.1">
    <property type="nucleotide sequence ID" value="NC_008740.1"/>
</dbReference>
<dbReference type="SMR" id="A1TZ11"/>
<dbReference type="STRING" id="351348.Maqu_0884"/>
<dbReference type="GeneID" id="31820260"/>
<dbReference type="KEGG" id="maq:Maqu_0884"/>
<dbReference type="eggNOG" id="COG0059">
    <property type="taxonomic scope" value="Bacteria"/>
</dbReference>
<dbReference type="HOGENOM" id="CLU_033821_0_1_6"/>
<dbReference type="OrthoDB" id="9804088at2"/>
<dbReference type="UniPathway" id="UPA00047">
    <property type="reaction ID" value="UER00056"/>
</dbReference>
<dbReference type="UniPathway" id="UPA00049">
    <property type="reaction ID" value="UER00060"/>
</dbReference>
<dbReference type="Proteomes" id="UP000000998">
    <property type="component" value="Chromosome"/>
</dbReference>
<dbReference type="GO" id="GO:0005829">
    <property type="term" value="C:cytosol"/>
    <property type="evidence" value="ECO:0007669"/>
    <property type="project" value="TreeGrafter"/>
</dbReference>
<dbReference type="GO" id="GO:0004455">
    <property type="term" value="F:ketol-acid reductoisomerase activity"/>
    <property type="evidence" value="ECO:0007669"/>
    <property type="project" value="UniProtKB-UniRule"/>
</dbReference>
<dbReference type="GO" id="GO:0000287">
    <property type="term" value="F:magnesium ion binding"/>
    <property type="evidence" value="ECO:0007669"/>
    <property type="project" value="UniProtKB-UniRule"/>
</dbReference>
<dbReference type="GO" id="GO:0050661">
    <property type="term" value="F:NADP binding"/>
    <property type="evidence" value="ECO:0007669"/>
    <property type="project" value="InterPro"/>
</dbReference>
<dbReference type="GO" id="GO:0009097">
    <property type="term" value="P:isoleucine biosynthetic process"/>
    <property type="evidence" value="ECO:0007669"/>
    <property type="project" value="UniProtKB-UniRule"/>
</dbReference>
<dbReference type="GO" id="GO:0009099">
    <property type="term" value="P:L-valine biosynthetic process"/>
    <property type="evidence" value="ECO:0007669"/>
    <property type="project" value="UniProtKB-UniRule"/>
</dbReference>
<dbReference type="FunFam" id="3.40.50.720:FF:000023">
    <property type="entry name" value="Ketol-acid reductoisomerase (NADP(+))"/>
    <property type="match status" value="1"/>
</dbReference>
<dbReference type="Gene3D" id="6.10.240.10">
    <property type="match status" value="1"/>
</dbReference>
<dbReference type="Gene3D" id="3.40.50.720">
    <property type="entry name" value="NAD(P)-binding Rossmann-like Domain"/>
    <property type="match status" value="1"/>
</dbReference>
<dbReference type="HAMAP" id="MF_00435">
    <property type="entry name" value="IlvC"/>
    <property type="match status" value="1"/>
</dbReference>
<dbReference type="InterPro" id="IPR008927">
    <property type="entry name" value="6-PGluconate_DH-like_C_sf"/>
</dbReference>
<dbReference type="InterPro" id="IPR013023">
    <property type="entry name" value="KARI"/>
</dbReference>
<dbReference type="InterPro" id="IPR000506">
    <property type="entry name" value="KARI_C"/>
</dbReference>
<dbReference type="InterPro" id="IPR013116">
    <property type="entry name" value="KARI_N"/>
</dbReference>
<dbReference type="InterPro" id="IPR014359">
    <property type="entry name" value="KARI_prok"/>
</dbReference>
<dbReference type="InterPro" id="IPR036291">
    <property type="entry name" value="NAD(P)-bd_dom_sf"/>
</dbReference>
<dbReference type="NCBIfam" id="TIGR00465">
    <property type="entry name" value="ilvC"/>
    <property type="match status" value="1"/>
</dbReference>
<dbReference type="NCBIfam" id="NF004017">
    <property type="entry name" value="PRK05479.1"/>
    <property type="match status" value="1"/>
</dbReference>
<dbReference type="NCBIfam" id="NF009940">
    <property type="entry name" value="PRK13403.1"/>
    <property type="match status" value="1"/>
</dbReference>
<dbReference type="PANTHER" id="PTHR21371">
    <property type="entry name" value="KETOL-ACID REDUCTOISOMERASE, MITOCHONDRIAL"/>
    <property type="match status" value="1"/>
</dbReference>
<dbReference type="PANTHER" id="PTHR21371:SF1">
    <property type="entry name" value="KETOL-ACID REDUCTOISOMERASE, MITOCHONDRIAL"/>
    <property type="match status" value="1"/>
</dbReference>
<dbReference type="Pfam" id="PF01450">
    <property type="entry name" value="KARI_C"/>
    <property type="match status" value="1"/>
</dbReference>
<dbReference type="Pfam" id="PF07991">
    <property type="entry name" value="KARI_N"/>
    <property type="match status" value="1"/>
</dbReference>
<dbReference type="PIRSF" id="PIRSF000116">
    <property type="entry name" value="IlvC_gammaproteo"/>
    <property type="match status" value="1"/>
</dbReference>
<dbReference type="SUPFAM" id="SSF48179">
    <property type="entry name" value="6-phosphogluconate dehydrogenase C-terminal domain-like"/>
    <property type="match status" value="1"/>
</dbReference>
<dbReference type="SUPFAM" id="SSF51735">
    <property type="entry name" value="NAD(P)-binding Rossmann-fold domains"/>
    <property type="match status" value="1"/>
</dbReference>
<dbReference type="PROSITE" id="PS51851">
    <property type="entry name" value="KARI_C"/>
    <property type="match status" value="1"/>
</dbReference>
<dbReference type="PROSITE" id="PS51850">
    <property type="entry name" value="KARI_N"/>
    <property type="match status" value="1"/>
</dbReference>
<protein>
    <recommendedName>
        <fullName evidence="1">Ketol-acid reductoisomerase (NADP(+))</fullName>
        <shortName evidence="1">KARI</shortName>
        <ecNumber evidence="1">1.1.1.86</ecNumber>
    </recommendedName>
    <alternativeName>
        <fullName evidence="1">Acetohydroxy-acid isomeroreductase</fullName>
        <shortName evidence="1">AHIR</shortName>
    </alternativeName>
    <alternativeName>
        <fullName evidence="1">Alpha-keto-beta-hydroxylacyl reductoisomerase</fullName>
    </alternativeName>
    <alternativeName>
        <fullName evidence="1">Ketol-acid reductoisomerase type 1</fullName>
    </alternativeName>
    <alternativeName>
        <fullName evidence="1">Ketol-acid reductoisomerase type I</fullName>
    </alternativeName>
</protein>
<feature type="chain" id="PRO_1000050526" description="Ketol-acid reductoisomerase (NADP(+))">
    <location>
        <begin position="1"/>
        <end position="338"/>
    </location>
</feature>
<feature type="domain" description="KARI N-terminal Rossmann" evidence="2">
    <location>
        <begin position="1"/>
        <end position="181"/>
    </location>
</feature>
<feature type="domain" description="KARI C-terminal knotted" evidence="3">
    <location>
        <begin position="182"/>
        <end position="327"/>
    </location>
</feature>
<feature type="active site" evidence="1">
    <location>
        <position position="107"/>
    </location>
</feature>
<feature type="binding site" evidence="1">
    <location>
        <begin position="24"/>
        <end position="27"/>
    </location>
    <ligand>
        <name>NADP(+)</name>
        <dbReference type="ChEBI" id="CHEBI:58349"/>
    </ligand>
</feature>
<feature type="binding site" evidence="1">
    <location>
        <position position="47"/>
    </location>
    <ligand>
        <name>NADP(+)</name>
        <dbReference type="ChEBI" id="CHEBI:58349"/>
    </ligand>
</feature>
<feature type="binding site" evidence="1">
    <location>
        <position position="50"/>
    </location>
    <ligand>
        <name>NADP(+)</name>
        <dbReference type="ChEBI" id="CHEBI:58349"/>
    </ligand>
</feature>
<feature type="binding site" evidence="1">
    <location>
        <position position="52"/>
    </location>
    <ligand>
        <name>NADP(+)</name>
        <dbReference type="ChEBI" id="CHEBI:58349"/>
    </ligand>
</feature>
<feature type="binding site" evidence="1">
    <location>
        <begin position="82"/>
        <end position="85"/>
    </location>
    <ligand>
        <name>NADP(+)</name>
        <dbReference type="ChEBI" id="CHEBI:58349"/>
    </ligand>
</feature>
<feature type="binding site" evidence="1">
    <location>
        <position position="133"/>
    </location>
    <ligand>
        <name>NADP(+)</name>
        <dbReference type="ChEBI" id="CHEBI:58349"/>
    </ligand>
</feature>
<feature type="binding site" evidence="1">
    <location>
        <position position="190"/>
    </location>
    <ligand>
        <name>Mg(2+)</name>
        <dbReference type="ChEBI" id="CHEBI:18420"/>
        <label>1</label>
    </ligand>
</feature>
<feature type="binding site" evidence="1">
    <location>
        <position position="190"/>
    </location>
    <ligand>
        <name>Mg(2+)</name>
        <dbReference type="ChEBI" id="CHEBI:18420"/>
        <label>2</label>
    </ligand>
</feature>
<feature type="binding site" evidence="1">
    <location>
        <position position="194"/>
    </location>
    <ligand>
        <name>Mg(2+)</name>
        <dbReference type="ChEBI" id="CHEBI:18420"/>
        <label>1</label>
    </ligand>
</feature>
<feature type="binding site" evidence="1">
    <location>
        <position position="226"/>
    </location>
    <ligand>
        <name>Mg(2+)</name>
        <dbReference type="ChEBI" id="CHEBI:18420"/>
        <label>2</label>
    </ligand>
</feature>
<feature type="binding site" evidence="1">
    <location>
        <position position="230"/>
    </location>
    <ligand>
        <name>Mg(2+)</name>
        <dbReference type="ChEBI" id="CHEBI:18420"/>
        <label>2</label>
    </ligand>
</feature>
<feature type="binding site" evidence="1">
    <location>
        <position position="251"/>
    </location>
    <ligand>
        <name>substrate</name>
    </ligand>
</feature>